<proteinExistence type="inferred from homology"/>
<evidence type="ECO:0000255" key="1">
    <source>
        <dbReference type="HAMAP-Rule" id="MF_00305"/>
    </source>
</evidence>
<name>SRP19_HALS3</name>
<keyword id="KW-0963">Cytoplasm</keyword>
<keyword id="KW-0687">Ribonucleoprotein</keyword>
<keyword id="KW-0694">RNA-binding</keyword>
<keyword id="KW-0733">Signal recognition particle</keyword>
<feature type="chain" id="PRO_1000115617" description="Signal recognition particle 19 kDa protein">
    <location>
        <begin position="1"/>
        <end position="92"/>
    </location>
</feature>
<accession>B0R5G1</accession>
<dbReference type="EMBL" id="AM774415">
    <property type="protein sequence ID" value="CAP13978.1"/>
    <property type="molecule type" value="Genomic_DNA"/>
</dbReference>
<dbReference type="RefSeq" id="WP_010902992.1">
    <property type="nucleotide sequence ID" value="NC_010364.1"/>
</dbReference>
<dbReference type="SMR" id="B0R5G1"/>
<dbReference type="EnsemblBacteria" id="CAP13978">
    <property type="protein sequence ID" value="CAP13978"/>
    <property type="gene ID" value="OE_2950R"/>
</dbReference>
<dbReference type="GeneID" id="68694101"/>
<dbReference type="KEGG" id="hsl:OE_2950R"/>
<dbReference type="HOGENOM" id="CLU_169299_1_0_2"/>
<dbReference type="PhylomeDB" id="B0R5G1"/>
<dbReference type="Proteomes" id="UP000001321">
    <property type="component" value="Chromosome"/>
</dbReference>
<dbReference type="GO" id="GO:0048500">
    <property type="term" value="C:signal recognition particle"/>
    <property type="evidence" value="ECO:0007669"/>
    <property type="project" value="UniProtKB-UniRule"/>
</dbReference>
<dbReference type="GO" id="GO:0008312">
    <property type="term" value="F:7S RNA binding"/>
    <property type="evidence" value="ECO:0007669"/>
    <property type="project" value="UniProtKB-UniRule"/>
</dbReference>
<dbReference type="GO" id="GO:0006617">
    <property type="term" value="P:SRP-dependent cotranslational protein targeting to membrane, signal sequence recognition"/>
    <property type="evidence" value="ECO:0007669"/>
    <property type="project" value="TreeGrafter"/>
</dbReference>
<dbReference type="Gene3D" id="3.30.56.30">
    <property type="entry name" value="Signal recognition particle, SRP19-like subunit"/>
    <property type="match status" value="1"/>
</dbReference>
<dbReference type="HAMAP" id="MF_00305">
    <property type="entry name" value="SRP19"/>
    <property type="match status" value="1"/>
</dbReference>
<dbReference type="InterPro" id="IPR002778">
    <property type="entry name" value="Signal_recog_particle_SRP19"/>
</dbReference>
<dbReference type="InterPro" id="IPR053394">
    <property type="entry name" value="SRP19"/>
</dbReference>
<dbReference type="InterPro" id="IPR036521">
    <property type="entry name" value="SRP19-like_sf"/>
</dbReference>
<dbReference type="InterPro" id="IPR022938">
    <property type="entry name" value="SRP19_arc-type"/>
</dbReference>
<dbReference type="NCBIfam" id="NF041311">
    <property type="entry name" value="Sig_rec_Srp19_Halo"/>
    <property type="match status" value="1"/>
</dbReference>
<dbReference type="PANTHER" id="PTHR17453">
    <property type="entry name" value="SIGNAL RECOGNITION PARTICLE 19 KD PROTEIN"/>
    <property type="match status" value="1"/>
</dbReference>
<dbReference type="PANTHER" id="PTHR17453:SF0">
    <property type="entry name" value="SIGNAL RECOGNITION PARTICLE 19 KDA PROTEIN"/>
    <property type="match status" value="1"/>
</dbReference>
<dbReference type="Pfam" id="PF01922">
    <property type="entry name" value="SRP19"/>
    <property type="match status" value="1"/>
</dbReference>
<dbReference type="SUPFAM" id="SSF69695">
    <property type="entry name" value="SRP19"/>
    <property type="match status" value="1"/>
</dbReference>
<reference key="1">
    <citation type="journal article" date="2008" name="Genomics">
        <title>Evolution in the laboratory: the genome of Halobacterium salinarum strain R1 compared to that of strain NRC-1.</title>
        <authorList>
            <person name="Pfeiffer F."/>
            <person name="Schuster S.C."/>
            <person name="Broicher A."/>
            <person name="Falb M."/>
            <person name="Palm P."/>
            <person name="Rodewald K."/>
            <person name="Ruepp A."/>
            <person name="Soppa J."/>
            <person name="Tittor J."/>
            <person name="Oesterhelt D."/>
        </authorList>
    </citation>
    <scope>NUCLEOTIDE SEQUENCE [LARGE SCALE GENOMIC DNA]</scope>
    <source>
        <strain>ATCC 29341 / DSM 671 / R1</strain>
    </source>
</reference>
<organism>
    <name type="scientific">Halobacterium salinarum (strain ATCC 29341 / DSM 671 / R1)</name>
    <dbReference type="NCBI Taxonomy" id="478009"/>
    <lineage>
        <taxon>Archaea</taxon>
        <taxon>Methanobacteriati</taxon>
        <taxon>Methanobacteriota</taxon>
        <taxon>Stenosarchaea group</taxon>
        <taxon>Halobacteria</taxon>
        <taxon>Halobacteriales</taxon>
        <taxon>Halobacteriaceae</taxon>
        <taxon>Halobacterium</taxon>
        <taxon>Halobacterium salinarum NRC-34001</taxon>
    </lineage>
</organism>
<comment type="function">
    <text evidence="1">Involved in targeting and insertion of nascent membrane proteins into the cytoplasmic membrane. Binds directly to 7S RNA and mediates binding of the 54 kDa subunit of the SRP.</text>
</comment>
<comment type="subunit">
    <text evidence="1">Part of the signal recognition particle protein translocation system, which is composed of SRP and FtsY. Archaeal SRP consists of a 7S RNA molecule of 300 nucleotides and two protein subunits: SRP54 and SRP19.</text>
</comment>
<comment type="subcellular location">
    <subcellularLocation>
        <location evidence="1">Cytoplasm</location>
    </subcellularLocation>
</comment>
<comment type="similarity">
    <text evidence="1">Belongs to the SRP19 family.</text>
</comment>
<protein>
    <recommendedName>
        <fullName evidence="1">Signal recognition particle 19 kDa protein</fullName>
        <shortName evidence="1">SRP19</shortName>
    </recommendedName>
</protein>
<gene>
    <name evidence="1" type="primary">srp19</name>
    <name type="ordered locus">OE_2950R</name>
</gene>
<sequence length="92" mass="10213">MVENVIWPAYFDAALSRRDGRRVPMELAVEEPSIDEIATAVQQVGYDAVVERDVAYPRRHWDAAGRVLVKDADDAKNTLVQAVAAYVGALRD</sequence>